<feature type="chain" id="PRO_0000116481" description="SWR1 complex subunit swc3">
    <location>
        <begin position="1"/>
        <end position="391"/>
    </location>
</feature>
<feature type="region of interest" description="Disordered" evidence="1">
    <location>
        <begin position="1"/>
        <end position="27"/>
    </location>
</feature>
<feature type="region of interest" description="Disordered" evidence="1">
    <location>
        <begin position="170"/>
        <end position="190"/>
    </location>
</feature>
<feature type="compositionally biased region" description="Polar residues" evidence="1">
    <location>
        <begin position="1"/>
        <end position="13"/>
    </location>
</feature>
<comment type="function">
    <text>Component of the SWR1 complex which mediates the ATP-dependent exchange of histone H2A for the H2A variant H2A.Z leading to transcriptional regulation of selected genes by chromatin remodeling.</text>
</comment>
<comment type="subunit">
    <text evidence="3">Component of the SWR1 chromatin-remodeling complex.</text>
</comment>
<comment type="subcellular location">
    <subcellularLocation>
        <location evidence="2">Nucleus</location>
    </subcellularLocation>
    <subcellularLocation>
        <location evidence="2">Cytoplasm</location>
    </subcellularLocation>
</comment>
<comment type="similarity">
    <text evidence="4">Belongs to the SWC3 family.</text>
</comment>
<name>SWC3_SCHPO</name>
<reference key="1">
    <citation type="journal article" date="2002" name="Nature">
        <title>The genome sequence of Schizosaccharomyces pombe.</title>
        <authorList>
            <person name="Wood V."/>
            <person name="Gwilliam R."/>
            <person name="Rajandream M.A."/>
            <person name="Lyne M.H."/>
            <person name="Lyne R."/>
            <person name="Stewart A."/>
            <person name="Sgouros J.G."/>
            <person name="Peat N."/>
            <person name="Hayles J."/>
            <person name="Baker S.G."/>
            <person name="Basham D."/>
            <person name="Bowman S."/>
            <person name="Brooks K."/>
            <person name="Brown D."/>
            <person name="Brown S."/>
            <person name="Chillingworth T."/>
            <person name="Churcher C.M."/>
            <person name="Collins M."/>
            <person name="Connor R."/>
            <person name="Cronin A."/>
            <person name="Davis P."/>
            <person name="Feltwell T."/>
            <person name="Fraser A."/>
            <person name="Gentles S."/>
            <person name="Goble A."/>
            <person name="Hamlin N."/>
            <person name="Harris D.E."/>
            <person name="Hidalgo J."/>
            <person name="Hodgson G."/>
            <person name="Holroyd S."/>
            <person name="Hornsby T."/>
            <person name="Howarth S."/>
            <person name="Huckle E.J."/>
            <person name="Hunt S."/>
            <person name="Jagels K."/>
            <person name="James K.D."/>
            <person name="Jones L."/>
            <person name="Jones M."/>
            <person name="Leather S."/>
            <person name="McDonald S."/>
            <person name="McLean J."/>
            <person name="Mooney P."/>
            <person name="Moule S."/>
            <person name="Mungall K.L."/>
            <person name="Murphy L.D."/>
            <person name="Niblett D."/>
            <person name="Odell C."/>
            <person name="Oliver K."/>
            <person name="O'Neil S."/>
            <person name="Pearson D."/>
            <person name="Quail M.A."/>
            <person name="Rabbinowitsch E."/>
            <person name="Rutherford K.M."/>
            <person name="Rutter S."/>
            <person name="Saunders D."/>
            <person name="Seeger K."/>
            <person name="Sharp S."/>
            <person name="Skelton J."/>
            <person name="Simmonds M.N."/>
            <person name="Squares R."/>
            <person name="Squares S."/>
            <person name="Stevens K."/>
            <person name="Taylor K."/>
            <person name="Taylor R.G."/>
            <person name="Tivey A."/>
            <person name="Walsh S.V."/>
            <person name="Warren T."/>
            <person name="Whitehead S."/>
            <person name="Woodward J.R."/>
            <person name="Volckaert G."/>
            <person name="Aert R."/>
            <person name="Robben J."/>
            <person name="Grymonprez B."/>
            <person name="Weltjens I."/>
            <person name="Vanstreels E."/>
            <person name="Rieger M."/>
            <person name="Schaefer M."/>
            <person name="Mueller-Auer S."/>
            <person name="Gabel C."/>
            <person name="Fuchs M."/>
            <person name="Duesterhoeft A."/>
            <person name="Fritzc C."/>
            <person name="Holzer E."/>
            <person name="Moestl D."/>
            <person name="Hilbert H."/>
            <person name="Borzym K."/>
            <person name="Langer I."/>
            <person name="Beck A."/>
            <person name="Lehrach H."/>
            <person name="Reinhardt R."/>
            <person name="Pohl T.M."/>
            <person name="Eger P."/>
            <person name="Zimmermann W."/>
            <person name="Wedler H."/>
            <person name="Wambutt R."/>
            <person name="Purnelle B."/>
            <person name="Goffeau A."/>
            <person name="Cadieu E."/>
            <person name="Dreano S."/>
            <person name="Gloux S."/>
            <person name="Lelaure V."/>
            <person name="Mottier S."/>
            <person name="Galibert F."/>
            <person name="Aves S.J."/>
            <person name="Xiang Z."/>
            <person name="Hunt C."/>
            <person name="Moore K."/>
            <person name="Hurst S.M."/>
            <person name="Lucas M."/>
            <person name="Rochet M."/>
            <person name="Gaillardin C."/>
            <person name="Tallada V.A."/>
            <person name="Garzon A."/>
            <person name="Thode G."/>
            <person name="Daga R.R."/>
            <person name="Cruzado L."/>
            <person name="Jimenez J."/>
            <person name="Sanchez M."/>
            <person name="del Rey F."/>
            <person name="Benito J."/>
            <person name="Dominguez A."/>
            <person name="Revuelta J.L."/>
            <person name="Moreno S."/>
            <person name="Armstrong J."/>
            <person name="Forsburg S.L."/>
            <person name="Cerutti L."/>
            <person name="Lowe T."/>
            <person name="McCombie W.R."/>
            <person name="Paulsen I."/>
            <person name="Potashkin J."/>
            <person name="Shpakovski G.V."/>
            <person name="Ussery D."/>
            <person name="Barrell B.G."/>
            <person name="Nurse P."/>
        </authorList>
    </citation>
    <scope>NUCLEOTIDE SEQUENCE [LARGE SCALE GENOMIC DNA]</scope>
    <source>
        <strain>972 / ATCC 24843</strain>
    </source>
</reference>
<reference key="2">
    <citation type="journal article" date="2006" name="Nat. Biotechnol.">
        <title>ORFeome cloning and global analysis of protein localization in the fission yeast Schizosaccharomyces pombe.</title>
        <authorList>
            <person name="Matsuyama A."/>
            <person name="Arai R."/>
            <person name="Yashiroda Y."/>
            <person name="Shirai A."/>
            <person name="Kamata A."/>
            <person name="Sekido S."/>
            <person name="Kobayashi Y."/>
            <person name="Hashimoto A."/>
            <person name="Hamamoto M."/>
            <person name="Hiraoka Y."/>
            <person name="Horinouchi S."/>
            <person name="Yoshida M."/>
        </authorList>
    </citation>
    <scope>SUBCELLULAR LOCATION [LARGE SCALE ANALYSIS]</scope>
</reference>
<reference key="3">
    <citation type="journal article" date="2008" name="Genome Biol.">
        <title>Chromatin Central: towards the comparative proteome by accurate mapping of the yeast proteomic environment.</title>
        <authorList>
            <person name="Shevchenko A."/>
            <person name="Roguev A."/>
            <person name="Schaft D."/>
            <person name="Buchanan L."/>
            <person name="Habermann B."/>
            <person name="Sakalar C."/>
            <person name="Thomas H."/>
            <person name="Krogan N.J."/>
            <person name="Shevchenko A."/>
            <person name="Stewart A.F."/>
        </authorList>
    </citation>
    <scope>IDENTIFICATION IN THE SWR1 COMPLEX</scope>
    <scope>IDENTIFICATION BY MASS SPECTROMETRY</scope>
</reference>
<sequence length="391" mass="44717">MSLNGTFSHNNGLPSGEREESETPGGSTSIISSSFLLQPRASDSRPDALEGKYDKNVLARALKKSRDSCLNGALFEKFLPEENYKLSGGTVFSHVRYIDTATLCVGPLRFEDTKFYFVHYSNSPIEPFAKPNISYVNPQWNELDYRPDSQKLSPGKEKNTLDLKHCLLPSPEYKAPPAKKPEDYEASPGEPVEPLITDASLQRLKSRANEDPTIFNILKRISKGLGTPEQCMLLHNELIGPSTFPLPKRAKKPPRKRITLSINQQDKDEFFDSLINNKKEVRRHFDIVMEFSDAPDTKWIFPRESVLSHVFNTDKKKLEALSLLFHVYRPTEDRNVIDVKTEIKIRDFTPTLRSAIELLTSGTHADRLLSEKRRRMSNLEPKYYMQFHEQT</sequence>
<keyword id="KW-0156">Chromatin regulator</keyword>
<keyword id="KW-0963">Cytoplasm</keyword>
<keyword id="KW-0539">Nucleus</keyword>
<keyword id="KW-1185">Reference proteome</keyword>
<gene>
    <name type="primary">swc3</name>
    <name type="ORF">SPAC4H3.02c</name>
</gene>
<dbReference type="EMBL" id="CU329670">
    <property type="protein sequence ID" value="CAA93341.1"/>
    <property type="molecule type" value="Genomic_DNA"/>
</dbReference>
<dbReference type="PIR" id="T38882">
    <property type="entry name" value="T38882"/>
</dbReference>
<dbReference type="RefSeq" id="NP_594338.1">
    <property type="nucleotide sequence ID" value="NM_001019759.2"/>
</dbReference>
<dbReference type="SMR" id="Q10210"/>
<dbReference type="BioGRID" id="280081">
    <property type="interactions" value="77"/>
</dbReference>
<dbReference type="FunCoup" id="Q10210">
    <property type="interactions" value="16"/>
</dbReference>
<dbReference type="STRING" id="284812.Q10210"/>
<dbReference type="iPTMnet" id="Q10210"/>
<dbReference type="PaxDb" id="4896-SPAC4H3.02c.1"/>
<dbReference type="EnsemblFungi" id="SPAC4H3.02c.1">
    <property type="protein sequence ID" value="SPAC4H3.02c.1:pep"/>
    <property type="gene ID" value="SPAC4H3.02c"/>
</dbReference>
<dbReference type="GeneID" id="2543667"/>
<dbReference type="KEGG" id="spo:2543667"/>
<dbReference type="PomBase" id="SPAC4H3.02c">
    <property type="gene designation" value="swc3"/>
</dbReference>
<dbReference type="VEuPathDB" id="FungiDB:SPAC4H3.02c"/>
<dbReference type="HOGENOM" id="CLU_702405_0_0_1"/>
<dbReference type="InParanoid" id="Q10210"/>
<dbReference type="OMA" id="CILLHNE"/>
<dbReference type="PRO" id="PR:Q10210"/>
<dbReference type="Proteomes" id="UP000002485">
    <property type="component" value="Chromosome I"/>
</dbReference>
<dbReference type="GO" id="GO:0005829">
    <property type="term" value="C:cytosol"/>
    <property type="evidence" value="ECO:0007005"/>
    <property type="project" value="PomBase"/>
</dbReference>
<dbReference type="GO" id="GO:0005634">
    <property type="term" value="C:nucleus"/>
    <property type="evidence" value="ECO:0007005"/>
    <property type="project" value="PomBase"/>
</dbReference>
<dbReference type="GO" id="GO:0000812">
    <property type="term" value="C:Swr1 complex"/>
    <property type="evidence" value="ECO:0000314"/>
    <property type="project" value="PomBase"/>
</dbReference>
<dbReference type="GO" id="GO:0016887">
    <property type="term" value="F:ATP hydrolysis activity"/>
    <property type="evidence" value="ECO:0000305"/>
    <property type="project" value="PomBase"/>
</dbReference>
<dbReference type="GO" id="GO:0006338">
    <property type="term" value="P:chromatin remodeling"/>
    <property type="evidence" value="ECO:0000353"/>
    <property type="project" value="PomBase"/>
</dbReference>
<dbReference type="GO" id="GO:0045815">
    <property type="term" value="P:transcription initiation-coupled chromatin remodeling"/>
    <property type="evidence" value="ECO:0000305"/>
    <property type="project" value="PomBase"/>
</dbReference>
<accession>Q10210</accession>
<organism>
    <name type="scientific">Schizosaccharomyces pombe (strain 972 / ATCC 24843)</name>
    <name type="common">Fission yeast</name>
    <dbReference type="NCBI Taxonomy" id="284812"/>
    <lineage>
        <taxon>Eukaryota</taxon>
        <taxon>Fungi</taxon>
        <taxon>Dikarya</taxon>
        <taxon>Ascomycota</taxon>
        <taxon>Taphrinomycotina</taxon>
        <taxon>Schizosaccharomycetes</taxon>
        <taxon>Schizosaccharomycetales</taxon>
        <taxon>Schizosaccharomycetaceae</taxon>
        <taxon>Schizosaccharomyces</taxon>
    </lineage>
</organism>
<protein>
    <recommendedName>
        <fullName>SWR1 complex subunit swc3</fullName>
    </recommendedName>
</protein>
<evidence type="ECO:0000256" key="1">
    <source>
        <dbReference type="SAM" id="MobiDB-lite"/>
    </source>
</evidence>
<evidence type="ECO:0000269" key="2">
    <source>
    </source>
</evidence>
<evidence type="ECO:0000269" key="3">
    <source>
    </source>
</evidence>
<evidence type="ECO:0000305" key="4"/>
<proteinExistence type="evidence at protein level"/>